<accession>Q5HNX4</accession>
<comment type="function">
    <text evidence="1">Found in functional membrane microdomains (FMM) that may be equivalent to eukaryotic membrane rafts. FMMs are highly dynamic and increase in number as cells age. Flotillins are thought to be important factors in membrane fluidity.</text>
</comment>
<comment type="subunit">
    <text evidence="1">Homooligomerizes.</text>
</comment>
<comment type="subcellular location">
    <subcellularLocation>
        <location evidence="1">Cell membrane</location>
        <topology evidence="1">Multi-pass membrane protein</topology>
    </subcellularLocation>
    <subcellularLocation>
        <location evidence="1">Membrane raft</location>
        <topology evidence="1">Multi-pass membrane protein</topology>
    </subcellularLocation>
</comment>
<comment type="similarity">
    <text evidence="1">Belongs to the flotillin-like FloA family.</text>
</comment>
<gene>
    <name evidence="1" type="primary">floA</name>
    <name type="ordered locus">SERP1140</name>
</gene>
<reference key="1">
    <citation type="journal article" date="2005" name="J. Bacteriol.">
        <title>Insights on evolution of virulence and resistance from the complete genome analysis of an early methicillin-resistant Staphylococcus aureus strain and a biofilm-producing methicillin-resistant Staphylococcus epidermidis strain.</title>
        <authorList>
            <person name="Gill S.R."/>
            <person name="Fouts D.E."/>
            <person name="Archer G.L."/>
            <person name="Mongodin E.F."/>
            <person name="DeBoy R.T."/>
            <person name="Ravel J."/>
            <person name="Paulsen I.T."/>
            <person name="Kolonay J.F."/>
            <person name="Brinkac L.M."/>
            <person name="Beanan M.J."/>
            <person name="Dodson R.J."/>
            <person name="Daugherty S.C."/>
            <person name="Madupu R."/>
            <person name="Angiuoli S.V."/>
            <person name="Durkin A.S."/>
            <person name="Haft D.H."/>
            <person name="Vamathevan J.J."/>
            <person name="Khouri H."/>
            <person name="Utterback T.R."/>
            <person name="Lee C."/>
            <person name="Dimitrov G."/>
            <person name="Jiang L."/>
            <person name="Qin H."/>
            <person name="Weidman J."/>
            <person name="Tran K."/>
            <person name="Kang K.H."/>
            <person name="Hance I.R."/>
            <person name="Nelson K.E."/>
            <person name="Fraser C.M."/>
        </authorList>
    </citation>
    <scope>NUCLEOTIDE SEQUENCE [LARGE SCALE GENOMIC DNA]</scope>
    <source>
        <strain>ATCC 35984 / DSM 28319 / BCRC 17069 / CCUG 31568 / BM 3577 / RP62A</strain>
    </source>
</reference>
<keyword id="KW-1003">Cell membrane</keyword>
<keyword id="KW-0472">Membrane</keyword>
<keyword id="KW-1185">Reference proteome</keyword>
<keyword id="KW-0812">Transmembrane</keyword>
<keyword id="KW-1133">Transmembrane helix</keyword>
<sequence>MFSIGFIIIAVIIVVALLILFSFVPVGLWISALAAGVHVGIGTLVGMRLRRVSPRKVIAPLIKAHKAGLNLTTNQLESHYLAGGNVDRVVDANIAAQRADIDLPFERGAAIDLAGRDVLEAVQMSVNPKVIETPFIAGVAMNGIEVKAKARITVRANIARLVGGAGEETIIARVGEGIVSTIGSSEHHTEVLENPDNISKTVLSKGLDSGTAFEILSIDIADVDISKNIGADLQTEQALADKNIAQAKAEERRAMAVASEQEMKARVQEMRAKVVEAESEVPLAMAEALRSGNIGVKDYYNLKNIEADTGMRNAINKRTDQNDDESPQQ</sequence>
<protein>
    <recommendedName>
        <fullName evidence="1">Flotillin-like protein FloA</fullName>
    </recommendedName>
</protein>
<evidence type="ECO:0000255" key="1">
    <source>
        <dbReference type="HAMAP-Rule" id="MF_01562"/>
    </source>
</evidence>
<organism>
    <name type="scientific">Staphylococcus epidermidis (strain ATCC 35984 / DSM 28319 / BCRC 17069 / CCUG 31568 / BM 3577 / RP62A)</name>
    <dbReference type="NCBI Taxonomy" id="176279"/>
    <lineage>
        <taxon>Bacteria</taxon>
        <taxon>Bacillati</taxon>
        <taxon>Bacillota</taxon>
        <taxon>Bacilli</taxon>
        <taxon>Bacillales</taxon>
        <taxon>Staphylococcaceae</taxon>
        <taxon>Staphylococcus</taxon>
    </lineage>
</organism>
<proteinExistence type="inferred from homology"/>
<name>FLOA_STAEQ</name>
<feature type="chain" id="PRO_0000232567" description="Flotillin-like protein FloA">
    <location>
        <begin position="1"/>
        <end position="329"/>
    </location>
</feature>
<feature type="transmembrane region" description="Helical" evidence="1">
    <location>
        <begin position="4"/>
        <end position="24"/>
    </location>
</feature>
<feature type="transmembrane region" description="Helical" evidence="1">
    <location>
        <begin position="26"/>
        <end position="46"/>
    </location>
</feature>
<dbReference type="EMBL" id="CP000029">
    <property type="protein sequence ID" value="AAW54468.1"/>
    <property type="molecule type" value="Genomic_DNA"/>
</dbReference>
<dbReference type="RefSeq" id="WP_001830989.1">
    <property type="nucleotide sequence ID" value="NC_002976.3"/>
</dbReference>
<dbReference type="SMR" id="Q5HNX4"/>
<dbReference type="STRING" id="176279.SERP1140"/>
<dbReference type="GeneID" id="50018624"/>
<dbReference type="KEGG" id="ser:SERP1140"/>
<dbReference type="eggNOG" id="COG4864">
    <property type="taxonomic scope" value="Bacteria"/>
</dbReference>
<dbReference type="HOGENOM" id="CLU_836378_0_0_9"/>
<dbReference type="Proteomes" id="UP000000531">
    <property type="component" value="Chromosome"/>
</dbReference>
<dbReference type="GO" id="GO:0045121">
    <property type="term" value="C:membrane raft"/>
    <property type="evidence" value="ECO:0007669"/>
    <property type="project" value="UniProtKB-SubCell"/>
</dbReference>
<dbReference type="GO" id="GO:0005886">
    <property type="term" value="C:plasma membrane"/>
    <property type="evidence" value="ECO:0007669"/>
    <property type="project" value="UniProtKB-SubCell"/>
</dbReference>
<dbReference type="HAMAP" id="MF_01562">
    <property type="entry name" value="FloA"/>
    <property type="match status" value="1"/>
</dbReference>
<dbReference type="InterPro" id="IPR022853">
    <property type="entry name" value="FloA"/>
</dbReference>
<dbReference type="NCBIfam" id="NF010186">
    <property type="entry name" value="PRK13665.1"/>
    <property type="match status" value="1"/>
</dbReference>
<dbReference type="Pfam" id="PF12127">
    <property type="entry name" value="FloA"/>
    <property type="match status" value="1"/>
</dbReference>